<dbReference type="EMBL" id="CP000813">
    <property type="protein sequence ID" value="ABV61692.1"/>
    <property type="molecule type" value="Genomic_DNA"/>
</dbReference>
<dbReference type="RefSeq" id="WP_012009507.1">
    <property type="nucleotide sequence ID" value="NZ_VEIS01000007.1"/>
</dbReference>
<dbReference type="SMR" id="A8FBS5"/>
<dbReference type="STRING" id="315750.BPUM_1008"/>
<dbReference type="GeneID" id="23399388"/>
<dbReference type="KEGG" id="bpu:BPUM_1008"/>
<dbReference type="eggNOG" id="ENOG5032W2Q">
    <property type="taxonomic scope" value="Bacteria"/>
</dbReference>
<dbReference type="HOGENOM" id="CLU_146641_1_1_9"/>
<dbReference type="OrthoDB" id="2365314at2"/>
<dbReference type="Proteomes" id="UP000001355">
    <property type="component" value="Chromosome"/>
</dbReference>
<dbReference type="GO" id="GO:0005886">
    <property type="term" value="C:plasma membrane"/>
    <property type="evidence" value="ECO:0007669"/>
    <property type="project" value="UniProtKB-SubCell"/>
</dbReference>
<dbReference type="HAMAP" id="MF_01536">
    <property type="entry name" value="UPF0344"/>
    <property type="match status" value="1"/>
</dbReference>
<dbReference type="InterPro" id="IPR010899">
    <property type="entry name" value="UPF0344"/>
</dbReference>
<dbReference type="NCBIfam" id="NF010198">
    <property type="entry name" value="PRK13673.1-5"/>
    <property type="match status" value="1"/>
</dbReference>
<dbReference type="Pfam" id="PF07457">
    <property type="entry name" value="DUF1516"/>
    <property type="match status" value="1"/>
</dbReference>
<reference key="1">
    <citation type="journal article" date="2007" name="PLoS ONE">
        <title>Paradoxical DNA repair and peroxide resistance gene conservation in Bacillus pumilus SAFR-032.</title>
        <authorList>
            <person name="Gioia J."/>
            <person name="Yerrapragada S."/>
            <person name="Qin X."/>
            <person name="Jiang H."/>
            <person name="Igboeli O.C."/>
            <person name="Muzny D."/>
            <person name="Dugan-Rocha S."/>
            <person name="Ding Y."/>
            <person name="Hawes A."/>
            <person name="Liu W."/>
            <person name="Perez L."/>
            <person name="Kovar C."/>
            <person name="Dinh H."/>
            <person name="Lee S."/>
            <person name="Nazareth L."/>
            <person name="Blyth P."/>
            <person name="Holder M."/>
            <person name="Buhay C."/>
            <person name="Tirumalai M.R."/>
            <person name="Liu Y."/>
            <person name="Dasgupta I."/>
            <person name="Bokhetache L."/>
            <person name="Fujita M."/>
            <person name="Karouia F."/>
            <person name="Eswara Moorthy P."/>
            <person name="Siefert J."/>
            <person name="Uzman A."/>
            <person name="Buzumbo P."/>
            <person name="Verma A."/>
            <person name="Zwiya H."/>
            <person name="McWilliams B.D."/>
            <person name="Olowu A."/>
            <person name="Clinkenbeard K.D."/>
            <person name="Newcombe D."/>
            <person name="Golebiewski L."/>
            <person name="Petrosino J.F."/>
            <person name="Nicholson W.L."/>
            <person name="Fox G.E."/>
            <person name="Venkateswaran K."/>
            <person name="Highlander S.K."/>
            <person name="Weinstock G.M."/>
        </authorList>
    </citation>
    <scope>NUCLEOTIDE SEQUENCE [LARGE SCALE GENOMIC DNA]</scope>
    <source>
        <strain>SAFR-032</strain>
    </source>
</reference>
<keyword id="KW-1003">Cell membrane</keyword>
<keyword id="KW-0472">Membrane</keyword>
<keyword id="KW-0812">Transmembrane</keyword>
<keyword id="KW-1133">Transmembrane helix</keyword>
<name>Y1008_BACP2</name>
<feature type="chain" id="PRO_0000318554" description="UPF0344 protein BPUM_1008">
    <location>
        <begin position="1"/>
        <end position="122"/>
    </location>
</feature>
<feature type="transmembrane region" description="Helical" evidence="1">
    <location>
        <begin position="5"/>
        <end position="25"/>
    </location>
</feature>
<feature type="transmembrane region" description="Helical" evidence="1">
    <location>
        <begin position="33"/>
        <end position="53"/>
    </location>
</feature>
<feature type="transmembrane region" description="Helical" evidence="1">
    <location>
        <begin position="60"/>
        <end position="80"/>
    </location>
</feature>
<feature type="transmembrane region" description="Helical" evidence="1">
    <location>
        <begin position="93"/>
        <end position="113"/>
    </location>
</feature>
<comment type="subcellular location">
    <subcellularLocation>
        <location evidence="1">Cell membrane</location>
        <topology evidence="1">Multi-pass membrane protein</topology>
    </subcellularLocation>
</comment>
<comment type="similarity">
    <text evidence="1">Belongs to the UPF0344 family.</text>
</comment>
<sequence length="122" mass="13370">MGTHLHITAWVLGIILFFVAFALAGKNDKGAKIVHMIVRLLYLIIIATGVELYVRTGMKIPGFGGEYIGKMILGILVIGFMEMTLVRKKKGKSVTGVLIGFIIFAIVTILLGLRLPIGFHIF</sequence>
<evidence type="ECO:0000255" key="1">
    <source>
        <dbReference type="HAMAP-Rule" id="MF_01536"/>
    </source>
</evidence>
<organism>
    <name type="scientific">Bacillus pumilus (strain SAFR-032)</name>
    <dbReference type="NCBI Taxonomy" id="315750"/>
    <lineage>
        <taxon>Bacteria</taxon>
        <taxon>Bacillati</taxon>
        <taxon>Bacillota</taxon>
        <taxon>Bacilli</taxon>
        <taxon>Bacillales</taxon>
        <taxon>Bacillaceae</taxon>
        <taxon>Bacillus</taxon>
    </lineage>
</organism>
<gene>
    <name type="ordered locus">BPUM_1008</name>
</gene>
<proteinExistence type="inferred from homology"/>
<protein>
    <recommendedName>
        <fullName evidence="1">UPF0344 protein BPUM_1008</fullName>
    </recommendedName>
</protein>
<accession>A8FBS5</accession>